<name>HIS2_HALWD</name>
<dbReference type="EC" id="3.6.1.31" evidence="1"/>
<dbReference type="EMBL" id="AM180088">
    <property type="protein sequence ID" value="CAJ51429.1"/>
    <property type="molecule type" value="Genomic_DNA"/>
</dbReference>
<dbReference type="RefSeq" id="WP_011570588.1">
    <property type="nucleotide sequence ID" value="NC_008212.1"/>
</dbReference>
<dbReference type="SMR" id="Q18KL7"/>
<dbReference type="STRING" id="362976.HQ_1300A"/>
<dbReference type="GeneID" id="4194119"/>
<dbReference type="KEGG" id="hwa:HQ_1300A"/>
<dbReference type="eggNOG" id="arCOG02677">
    <property type="taxonomic scope" value="Archaea"/>
</dbReference>
<dbReference type="HOGENOM" id="CLU_123337_0_1_2"/>
<dbReference type="UniPathway" id="UPA00031">
    <property type="reaction ID" value="UER00007"/>
</dbReference>
<dbReference type="Proteomes" id="UP000001975">
    <property type="component" value="Chromosome"/>
</dbReference>
<dbReference type="GO" id="GO:0005737">
    <property type="term" value="C:cytoplasm"/>
    <property type="evidence" value="ECO:0007669"/>
    <property type="project" value="UniProtKB-SubCell"/>
</dbReference>
<dbReference type="GO" id="GO:0005524">
    <property type="term" value="F:ATP binding"/>
    <property type="evidence" value="ECO:0007669"/>
    <property type="project" value="UniProtKB-KW"/>
</dbReference>
<dbReference type="GO" id="GO:0004636">
    <property type="term" value="F:phosphoribosyl-ATP diphosphatase activity"/>
    <property type="evidence" value="ECO:0007669"/>
    <property type="project" value="UniProtKB-UniRule"/>
</dbReference>
<dbReference type="GO" id="GO:0000105">
    <property type="term" value="P:L-histidine biosynthetic process"/>
    <property type="evidence" value="ECO:0007669"/>
    <property type="project" value="UniProtKB-UniRule"/>
</dbReference>
<dbReference type="CDD" id="cd11534">
    <property type="entry name" value="NTP-PPase_HisIE_like"/>
    <property type="match status" value="1"/>
</dbReference>
<dbReference type="Gene3D" id="1.10.287.1080">
    <property type="entry name" value="MazG-like"/>
    <property type="match status" value="1"/>
</dbReference>
<dbReference type="HAMAP" id="MF_01020">
    <property type="entry name" value="HisE"/>
    <property type="match status" value="1"/>
</dbReference>
<dbReference type="InterPro" id="IPR008179">
    <property type="entry name" value="HisE"/>
</dbReference>
<dbReference type="InterPro" id="IPR021130">
    <property type="entry name" value="PRib-ATP_PPHydrolase-like"/>
</dbReference>
<dbReference type="NCBIfam" id="TIGR03188">
    <property type="entry name" value="histidine_hisI"/>
    <property type="match status" value="1"/>
</dbReference>
<dbReference type="PANTHER" id="PTHR42945">
    <property type="entry name" value="HISTIDINE BIOSYNTHESIS BIFUNCTIONAL PROTEIN"/>
    <property type="match status" value="1"/>
</dbReference>
<dbReference type="PANTHER" id="PTHR42945:SF1">
    <property type="entry name" value="HISTIDINE BIOSYNTHESIS BIFUNCTIONAL PROTEIN HIS7"/>
    <property type="match status" value="1"/>
</dbReference>
<dbReference type="Pfam" id="PF01503">
    <property type="entry name" value="PRA-PH"/>
    <property type="match status" value="1"/>
</dbReference>
<dbReference type="SUPFAM" id="SSF101386">
    <property type="entry name" value="all-alpha NTP pyrophosphatases"/>
    <property type="match status" value="1"/>
</dbReference>
<comment type="catalytic activity">
    <reaction evidence="1">
        <text>1-(5-phospho-beta-D-ribosyl)-ATP + H2O = 1-(5-phospho-beta-D-ribosyl)-5'-AMP + diphosphate + H(+)</text>
        <dbReference type="Rhea" id="RHEA:22828"/>
        <dbReference type="ChEBI" id="CHEBI:15377"/>
        <dbReference type="ChEBI" id="CHEBI:15378"/>
        <dbReference type="ChEBI" id="CHEBI:33019"/>
        <dbReference type="ChEBI" id="CHEBI:59457"/>
        <dbReference type="ChEBI" id="CHEBI:73183"/>
        <dbReference type="EC" id="3.6.1.31"/>
    </reaction>
</comment>
<comment type="pathway">
    <text evidence="1">Amino-acid biosynthesis; L-histidine biosynthesis; L-histidine from 5-phospho-alpha-D-ribose 1-diphosphate: step 2/9.</text>
</comment>
<comment type="subcellular location">
    <subcellularLocation>
        <location evidence="1">Cytoplasm</location>
    </subcellularLocation>
</comment>
<comment type="similarity">
    <text evidence="1">Belongs to the PRA-PH family.</text>
</comment>
<protein>
    <recommendedName>
        <fullName evidence="1">Phosphoribosyl-ATP pyrophosphatase</fullName>
        <shortName evidence="1">PRA-PH</shortName>
        <ecNumber evidence="1">3.6.1.31</ecNumber>
    </recommendedName>
</protein>
<keyword id="KW-0028">Amino-acid biosynthesis</keyword>
<keyword id="KW-0067">ATP-binding</keyword>
<keyword id="KW-0963">Cytoplasm</keyword>
<keyword id="KW-0368">Histidine biosynthesis</keyword>
<keyword id="KW-0378">Hydrolase</keyword>
<keyword id="KW-0547">Nucleotide-binding</keyword>
<keyword id="KW-1185">Reference proteome</keyword>
<sequence length="100" mass="11142">MTDDELPKTVFDDLFSVIESRRETLPDDSYTASLFAHEKGENAALEKLGEEATETILAAKDSDSAAIQAESADLIYHLFVVLAMEEITLDDLREELHGRL</sequence>
<evidence type="ECO:0000255" key="1">
    <source>
        <dbReference type="HAMAP-Rule" id="MF_01020"/>
    </source>
</evidence>
<feature type="chain" id="PRO_0000319670" description="Phosphoribosyl-ATP pyrophosphatase">
    <location>
        <begin position="1"/>
        <end position="100"/>
    </location>
</feature>
<gene>
    <name evidence="1" type="primary">hisE</name>
    <name type="ordered locus">HQ_1300A</name>
</gene>
<reference key="1">
    <citation type="journal article" date="2006" name="BMC Genomics">
        <title>The genome of the square archaeon Haloquadratum walsbyi: life at the limits of water activity.</title>
        <authorList>
            <person name="Bolhuis H."/>
            <person name="Palm P."/>
            <person name="Wende A."/>
            <person name="Falb M."/>
            <person name="Rampp M."/>
            <person name="Rodriguez-Valera F."/>
            <person name="Pfeiffer F."/>
            <person name="Oesterhelt D."/>
        </authorList>
    </citation>
    <scope>NUCLEOTIDE SEQUENCE [LARGE SCALE GENOMIC DNA]</scope>
    <source>
        <strain>DSM 16790 / HBSQ001</strain>
    </source>
</reference>
<proteinExistence type="inferred from homology"/>
<organism>
    <name type="scientific">Haloquadratum walsbyi (strain DSM 16790 / HBSQ001)</name>
    <dbReference type="NCBI Taxonomy" id="362976"/>
    <lineage>
        <taxon>Archaea</taxon>
        <taxon>Methanobacteriati</taxon>
        <taxon>Methanobacteriota</taxon>
        <taxon>Stenosarchaea group</taxon>
        <taxon>Halobacteria</taxon>
        <taxon>Halobacteriales</taxon>
        <taxon>Haloferacaceae</taxon>
        <taxon>Haloquadratum</taxon>
    </lineage>
</organism>
<accession>Q18KL7</accession>